<dbReference type="EC" id="2.7.2.3" evidence="1"/>
<dbReference type="EMBL" id="AM494475">
    <property type="protein sequence ID" value="CAM80017.1"/>
    <property type="molecule type" value="Genomic_DNA"/>
</dbReference>
<dbReference type="RefSeq" id="WP_011944718.1">
    <property type="nucleotide sequence ID" value="NC_009488.1"/>
</dbReference>
<dbReference type="SMR" id="A5CDP5"/>
<dbReference type="KEGG" id="ots:OTBS_0951"/>
<dbReference type="eggNOG" id="COG0126">
    <property type="taxonomic scope" value="Bacteria"/>
</dbReference>
<dbReference type="HOGENOM" id="CLU_025427_0_2_5"/>
<dbReference type="UniPathway" id="UPA00109">
    <property type="reaction ID" value="UER00185"/>
</dbReference>
<dbReference type="Proteomes" id="UP000001565">
    <property type="component" value="Chromosome"/>
</dbReference>
<dbReference type="GO" id="GO:0005829">
    <property type="term" value="C:cytosol"/>
    <property type="evidence" value="ECO:0007669"/>
    <property type="project" value="TreeGrafter"/>
</dbReference>
<dbReference type="GO" id="GO:0043531">
    <property type="term" value="F:ADP binding"/>
    <property type="evidence" value="ECO:0007669"/>
    <property type="project" value="TreeGrafter"/>
</dbReference>
<dbReference type="GO" id="GO:0005524">
    <property type="term" value="F:ATP binding"/>
    <property type="evidence" value="ECO:0007669"/>
    <property type="project" value="UniProtKB-KW"/>
</dbReference>
<dbReference type="GO" id="GO:0004618">
    <property type="term" value="F:phosphoglycerate kinase activity"/>
    <property type="evidence" value="ECO:0007669"/>
    <property type="project" value="UniProtKB-UniRule"/>
</dbReference>
<dbReference type="GO" id="GO:0006094">
    <property type="term" value="P:gluconeogenesis"/>
    <property type="evidence" value="ECO:0007669"/>
    <property type="project" value="TreeGrafter"/>
</dbReference>
<dbReference type="GO" id="GO:0006096">
    <property type="term" value="P:glycolytic process"/>
    <property type="evidence" value="ECO:0007669"/>
    <property type="project" value="UniProtKB-UniRule"/>
</dbReference>
<dbReference type="FunFam" id="3.40.50.1260:FF:000006">
    <property type="entry name" value="Phosphoglycerate kinase"/>
    <property type="match status" value="1"/>
</dbReference>
<dbReference type="FunFam" id="3.40.50.1260:FF:000031">
    <property type="entry name" value="Phosphoglycerate kinase 1"/>
    <property type="match status" value="1"/>
</dbReference>
<dbReference type="Gene3D" id="3.40.50.1260">
    <property type="entry name" value="Phosphoglycerate kinase, N-terminal domain"/>
    <property type="match status" value="2"/>
</dbReference>
<dbReference type="HAMAP" id="MF_00145">
    <property type="entry name" value="Phosphoglyc_kinase"/>
    <property type="match status" value="1"/>
</dbReference>
<dbReference type="InterPro" id="IPR001576">
    <property type="entry name" value="Phosphoglycerate_kinase"/>
</dbReference>
<dbReference type="InterPro" id="IPR015824">
    <property type="entry name" value="Phosphoglycerate_kinase_N"/>
</dbReference>
<dbReference type="InterPro" id="IPR036043">
    <property type="entry name" value="Phosphoglycerate_kinase_sf"/>
</dbReference>
<dbReference type="PANTHER" id="PTHR11406">
    <property type="entry name" value="PHOSPHOGLYCERATE KINASE"/>
    <property type="match status" value="1"/>
</dbReference>
<dbReference type="PANTHER" id="PTHR11406:SF23">
    <property type="entry name" value="PHOSPHOGLYCERATE KINASE 1, CHLOROPLASTIC-RELATED"/>
    <property type="match status" value="1"/>
</dbReference>
<dbReference type="Pfam" id="PF00162">
    <property type="entry name" value="PGK"/>
    <property type="match status" value="1"/>
</dbReference>
<dbReference type="PIRSF" id="PIRSF000724">
    <property type="entry name" value="Pgk"/>
    <property type="match status" value="1"/>
</dbReference>
<dbReference type="PRINTS" id="PR00477">
    <property type="entry name" value="PHGLYCKINASE"/>
</dbReference>
<dbReference type="SUPFAM" id="SSF53748">
    <property type="entry name" value="Phosphoglycerate kinase"/>
    <property type="match status" value="1"/>
</dbReference>
<proteinExistence type="inferred from homology"/>
<evidence type="ECO:0000255" key="1">
    <source>
        <dbReference type="HAMAP-Rule" id="MF_00145"/>
    </source>
</evidence>
<organism>
    <name type="scientific">Orientia tsutsugamushi (strain Boryong)</name>
    <name type="common">Rickettsia tsutsugamushi</name>
    <dbReference type="NCBI Taxonomy" id="357244"/>
    <lineage>
        <taxon>Bacteria</taxon>
        <taxon>Pseudomonadati</taxon>
        <taxon>Pseudomonadota</taxon>
        <taxon>Alphaproteobacteria</taxon>
        <taxon>Rickettsiales</taxon>
        <taxon>Rickettsiaceae</taxon>
        <taxon>Rickettsieae</taxon>
        <taxon>Orientia</taxon>
    </lineage>
</organism>
<feature type="chain" id="PRO_1000096361" description="Phosphoglycerate kinase">
    <location>
        <begin position="1"/>
        <end position="403"/>
    </location>
</feature>
<feature type="binding site" evidence="1">
    <location>
        <begin position="22"/>
        <end position="24"/>
    </location>
    <ligand>
        <name>substrate</name>
    </ligand>
</feature>
<feature type="binding site" evidence="1">
    <location>
        <position position="37"/>
    </location>
    <ligand>
        <name>substrate</name>
    </ligand>
</feature>
<feature type="binding site" evidence="1">
    <location>
        <begin position="60"/>
        <end position="63"/>
    </location>
    <ligand>
        <name>substrate</name>
    </ligand>
</feature>
<feature type="binding site" evidence="1">
    <location>
        <position position="119"/>
    </location>
    <ligand>
        <name>substrate</name>
    </ligand>
</feature>
<feature type="binding site" evidence="1">
    <location>
        <position position="152"/>
    </location>
    <ligand>
        <name>substrate</name>
    </ligand>
</feature>
<feature type="binding site" evidence="1">
    <location>
        <position position="202"/>
    </location>
    <ligand>
        <name>ATP</name>
        <dbReference type="ChEBI" id="CHEBI:30616"/>
    </ligand>
</feature>
<feature type="binding site" evidence="1">
    <location>
        <position position="325"/>
    </location>
    <ligand>
        <name>ATP</name>
        <dbReference type="ChEBI" id="CHEBI:30616"/>
    </ligand>
</feature>
<feature type="binding site" evidence="1">
    <location>
        <begin position="355"/>
        <end position="358"/>
    </location>
    <ligand>
        <name>ATP</name>
        <dbReference type="ChEBI" id="CHEBI:30616"/>
    </ligand>
</feature>
<keyword id="KW-0067">ATP-binding</keyword>
<keyword id="KW-0963">Cytoplasm</keyword>
<keyword id="KW-0324">Glycolysis</keyword>
<keyword id="KW-0418">Kinase</keyword>
<keyword id="KW-0547">Nucleotide-binding</keyword>
<keyword id="KW-1185">Reference proteome</keyword>
<keyword id="KW-0808">Transferase</keyword>
<sequence>MIQLRQLSDVIVKDKVVLLRLDLNIPQEGGKITDNTRIVRTIPTIKYLILHGAKVVIISHLGNPKGRIELTLSLRSVVTELEALLNIKVQFCPESIGATPKNAIINMKAGEVLLLENLRFNSGEELNDATFINELGSSGDIYVNDAFSCSHRKHASICGLPTKLPSAAGFLLLSELKHLTSIFSNANKPFTVIIGGAKMSTKLDLLNSLITKADYLIVAGAMANIFLAMKRFNIGASLYKPELINVASLILKKATSTNCKIILPFDAVIQNFNSNNITILELNSSLVMQSNAKIMDIGPQTIAQIINIIKISKTVVWNGPVGAFEQTPFDYGSTYLSKAIAEKTRTGSLCSIAGGGDTISAIKKSGVIDDFSYISTGGGAFLEWLQGKTLPGVEALMQKFRYS</sequence>
<comment type="catalytic activity">
    <reaction evidence="1">
        <text>(2R)-3-phosphoglycerate + ATP = (2R)-3-phospho-glyceroyl phosphate + ADP</text>
        <dbReference type="Rhea" id="RHEA:14801"/>
        <dbReference type="ChEBI" id="CHEBI:30616"/>
        <dbReference type="ChEBI" id="CHEBI:57604"/>
        <dbReference type="ChEBI" id="CHEBI:58272"/>
        <dbReference type="ChEBI" id="CHEBI:456216"/>
        <dbReference type="EC" id="2.7.2.3"/>
    </reaction>
</comment>
<comment type="pathway">
    <text evidence="1">Carbohydrate degradation; glycolysis; pyruvate from D-glyceraldehyde 3-phosphate: step 2/5.</text>
</comment>
<comment type="subunit">
    <text evidence="1">Monomer.</text>
</comment>
<comment type="subcellular location">
    <subcellularLocation>
        <location evidence="1">Cytoplasm</location>
    </subcellularLocation>
</comment>
<comment type="similarity">
    <text evidence="1">Belongs to the phosphoglycerate kinase family.</text>
</comment>
<gene>
    <name evidence="1" type="primary">pgk</name>
    <name type="ordered locus">OTBS_0951</name>
</gene>
<reference key="1">
    <citation type="journal article" date="2007" name="Proc. Natl. Acad. Sci. U.S.A.">
        <title>The Orientia tsutsugamushi genome reveals massive proliferation of conjugative type IV secretion system and host-cell interaction genes.</title>
        <authorList>
            <person name="Cho N.-H."/>
            <person name="Kim H.-R."/>
            <person name="Lee J.-H."/>
            <person name="Kim S.-Y."/>
            <person name="Kim J."/>
            <person name="Cha S."/>
            <person name="Kim S.-Y."/>
            <person name="Darby A.C."/>
            <person name="Fuxelius H.-H."/>
            <person name="Yin J."/>
            <person name="Kim J.H."/>
            <person name="Kim J."/>
            <person name="Lee S.J."/>
            <person name="Koh Y.-S."/>
            <person name="Jang W.-J."/>
            <person name="Park K.-H."/>
            <person name="Andersson S.G.E."/>
            <person name="Choi M.-S."/>
            <person name="Kim I.-S."/>
        </authorList>
    </citation>
    <scope>NUCLEOTIDE SEQUENCE [LARGE SCALE GENOMIC DNA]</scope>
    <source>
        <strain>Boryong</strain>
    </source>
</reference>
<accession>A5CDP5</accession>
<protein>
    <recommendedName>
        <fullName evidence="1">Phosphoglycerate kinase</fullName>
        <ecNumber evidence="1">2.7.2.3</ecNumber>
    </recommendedName>
</protein>
<name>PGK_ORITB</name>